<sequence length="342" mass="36932">MVQNIAILGASGYTGAELVRLIATHPSMRIVALSGDRKAGMAMSEVFPFLRHLDLPRLQKIDEINFSNVDLAFCALPHATSQEVISALPRDLKIVDLSADFRLRDPAAYETWYGKPHSAPELQKEAVYGLTEFYRDEIRGARLVAGTGCNAATGQYAIRPLIEAGVIDLDDILIDLKAGVSGAGRSLKENLLHAELSEGTHAYSAGGTHRHLGEFDQEFSKIAGRPVQVRFTPHLTPMNRGILASVHVKGDPQAVHRALADRYLTETFLEVLPFGALPSTRDIRGSNYVHIGVIGDRIPGCALVVAVLDNLCKGSSGQAIQNANLMLGLDEAAGLRLAPVFP</sequence>
<feature type="chain" id="PRO_1000011051" description="N-acetyl-gamma-glutamyl-phosphate reductase">
    <location>
        <begin position="1"/>
        <end position="342"/>
    </location>
</feature>
<feature type="active site" evidence="1">
    <location>
        <position position="149"/>
    </location>
</feature>
<protein>
    <recommendedName>
        <fullName evidence="1">N-acetyl-gamma-glutamyl-phosphate reductase</fullName>
        <shortName evidence="1">AGPR</shortName>
        <ecNumber evidence="1">1.2.1.38</ecNumber>
    </recommendedName>
    <alternativeName>
        <fullName evidence="1">N-acetyl-glutamate semialdehyde dehydrogenase</fullName>
        <shortName evidence="1">NAGSA dehydrogenase</shortName>
    </alternativeName>
</protein>
<accession>A4WQY7</accession>
<evidence type="ECO:0000255" key="1">
    <source>
        <dbReference type="HAMAP-Rule" id="MF_00150"/>
    </source>
</evidence>
<reference key="1">
    <citation type="submission" date="2007-04" db="EMBL/GenBank/DDBJ databases">
        <title>Complete sequence of chromosome of Rhodobacter sphaeroides ATCC 17025.</title>
        <authorList>
            <consortium name="US DOE Joint Genome Institute"/>
            <person name="Copeland A."/>
            <person name="Lucas S."/>
            <person name="Lapidus A."/>
            <person name="Barry K."/>
            <person name="Detter J.C."/>
            <person name="Glavina del Rio T."/>
            <person name="Hammon N."/>
            <person name="Israni S."/>
            <person name="Dalin E."/>
            <person name="Tice H."/>
            <person name="Pitluck S."/>
            <person name="Chertkov O."/>
            <person name="Brettin T."/>
            <person name="Bruce D."/>
            <person name="Han C."/>
            <person name="Schmutz J."/>
            <person name="Larimer F."/>
            <person name="Land M."/>
            <person name="Hauser L."/>
            <person name="Kyrpides N."/>
            <person name="Kim E."/>
            <person name="Richardson P."/>
            <person name="Mackenzie C."/>
            <person name="Choudhary M."/>
            <person name="Donohue T.J."/>
            <person name="Kaplan S."/>
        </authorList>
    </citation>
    <scope>NUCLEOTIDE SEQUENCE [LARGE SCALE GENOMIC DNA]</scope>
    <source>
        <strain>ATCC 17025 / ATH 2.4.3</strain>
    </source>
</reference>
<comment type="function">
    <text evidence="1">Catalyzes the NADPH-dependent reduction of N-acetyl-5-glutamyl phosphate to yield N-acetyl-L-glutamate 5-semialdehyde.</text>
</comment>
<comment type="catalytic activity">
    <reaction evidence="1">
        <text>N-acetyl-L-glutamate 5-semialdehyde + phosphate + NADP(+) = N-acetyl-L-glutamyl 5-phosphate + NADPH + H(+)</text>
        <dbReference type="Rhea" id="RHEA:21588"/>
        <dbReference type="ChEBI" id="CHEBI:15378"/>
        <dbReference type="ChEBI" id="CHEBI:29123"/>
        <dbReference type="ChEBI" id="CHEBI:43474"/>
        <dbReference type="ChEBI" id="CHEBI:57783"/>
        <dbReference type="ChEBI" id="CHEBI:57936"/>
        <dbReference type="ChEBI" id="CHEBI:58349"/>
        <dbReference type="EC" id="1.2.1.38"/>
    </reaction>
</comment>
<comment type="pathway">
    <text evidence="1">Amino-acid biosynthesis; L-arginine biosynthesis; N(2)-acetyl-L-ornithine from L-glutamate: step 3/4.</text>
</comment>
<comment type="subcellular location">
    <subcellularLocation>
        <location evidence="1">Cytoplasm</location>
    </subcellularLocation>
</comment>
<comment type="similarity">
    <text evidence="1">Belongs to the NAGSA dehydrogenase family. Type 1 subfamily.</text>
</comment>
<keyword id="KW-0028">Amino-acid biosynthesis</keyword>
<keyword id="KW-0055">Arginine biosynthesis</keyword>
<keyword id="KW-0963">Cytoplasm</keyword>
<keyword id="KW-0521">NADP</keyword>
<keyword id="KW-0560">Oxidoreductase</keyword>
<name>ARGC_CERS5</name>
<organism>
    <name type="scientific">Cereibacter sphaeroides (strain ATCC 17025 / ATH 2.4.3)</name>
    <name type="common">Rhodobacter sphaeroides</name>
    <dbReference type="NCBI Taxonomy" id="349102"/>
    <lineage>
        <taxon>Bacteria</taxon>
        <taxon>Pseudomonadati</taxon>
        <taxon>Pseudomonadota</taxon>
        <taxon>Alphaproteobacteria</taxon>
        <taxon>Rhodobacterales</taxon>
        <taxon>Paracoccaceae</taxon>
        <taxon>Cereibacter</taxon>
    </lineage>
</organism>
<gene>
    <name evidence="1" type="primary">argC</name>
    <name type="ordered locus">Rsph17025_0898</name>
</gene>
<dbReference type="EC" id="1.2.1.38" evidence="1"/>
<dbReference type="EMBL" id="CP000661">
    <property type="protein sequence ID" value="ABP69801.1"/>
    <property type="molecule type" value="Genomic_DNA"/>
</dbReference>
<dbReference type="SMR" id="A4WQY7"/>
<dbReference type="STRING" id="349102.Rsph17025_0898"/>
<dbReference type="KEGG" id="rsq:Rsph17025_0898"/>
<dbReference type="eggNOG" id="COG0002">
    <property type="taxonomic scope" value="Bacteria"/>
</dbReference>
<dbReference type="HOGENOM" id="CLU_006384_0_1_5"/>
<dbReference type="BioCyc" id="RSPH349102:G1G8M-921-MONOMER"/>
<dbReference type="UniPathway" id="UPA00068">
    <property type="reaction ID" value="UER00108"/>
</dbReference>
<dbReference type="GO" id="GO:0005737">
    <property type="term" value="C:cytoplasm"/>
    <property type="evidence" value="ECO:0007669"/>
    <property type="project" value="UniProtKB-SubCell"/>
</dbReference>
<dbReference type="GO" id="GO:0003942">
    <property type="term" value="F:N-acetyl-gamma-glutamyl-phosphate reductase activity"/>
    <property type="evidence" value="ECO:0007669"/>
    <property type="project" value="UniProtKB-UniRule"/>
</dbReference>
<dbReference type="GO" id="GO:0051287">
    <property type="term" value="F:NAD binding"/>
    <property type="evidence" value="ECO:0007669"/>
    <property type="project" value="InterPro"/>
</dbReference>
<dbReference type="GO" id="GO:0070401">
    <property type="term" value="F:NADP+ binding"/>
    <property type="evidence" value="ECO:0007669"/>
    <property type="project" value="InterPro"/>
</dbReference>
<dbReference type="GO" id="GO:0006526">
    <property type="term" value="P:L-arginine biosynthetic process"/>
    <property type="evidence" value="ECO:0007669"/>
    <property type="project" value="UniProtKB-UniRule"/>
</dbReference>
<dbReference type="CDD" id="cd23934">
    <property type="entry name" value="AGPR_1_C"/>
    <property type="match status" value="1"/>
</dbReference>
<dbReference type="CDD" id="cd17895">
    <property type="entry name" value="AGPR_1_N"/>
    <property type="match status" value="1"/>
</dbReference>
<dbReference type="Gene3D" id="3.30.360.10">
    <property type="entry name" value="Dihydrodipicolinate Reductase, domain 2"/>
    <property type="match status" value="1"/>
</dbReference>
<dbReference type="Gene3D" id="3.40.50.720">
    <property type="entry name" value="NAD(P)-binding Rossmann-like Domain"/>
    <property type="match status" value="1"/>
</dbReference>
<dbReference type="HAMAP" id="MF_00150">
    <property type="entry name" value="ArgC_type1"/>
    <property type="match status" value="1"/>
</dbReference>
<dbReference type="InterPro" id="IPR000706">
    <property type="entry name" value="AGPR_type-1"/>
</dbReference>
<dbReference type="InterPro" id="IPR036291">
    <property type="entry name" value="NAD(P)-bd_dom_sf"/>
</dbReference>
<dbReference type="InterPro" id="IPR050085">
    <property type="entry name" value="NAGSA_dehydrogenase"/>
</dbReference>
<dbReference type="InterPro" id="IPR000534">
    <property type="entry name" value="Semialdehyde_DH_NAD-bd"/>
</dbReference>
<dbReference type="NCBIfam" id="TIGR01850">
    <property type="entry name" value="argC"/>
    <property type="match status" value="1"/>
</dbReference>
<dbReference type="PANTHER" id="PTHR32338:SF10">
    <property type="entry name" value="N-ACETYL-GAMMA-GLUTAMYL-PHOSPHATE REDUCTASE, CHLOROPLASTIC-RELATED"/>
    <property type="match status" value="1"/>
</dbReference>
<dbReference type="PANTHER" id="PTHR32338">
    <property type="entry name" value="N-ACETYL-GAMMA-GLUTAMYL-PHOSPHATE REDUCTASE, CHLOROPLASTIC-RELATED-RELATED"/>
    <property type="match status" value="1"/>
</dbReference>
<dbReference type="Pfam" id="PF01118">
    <property type="entry name" value="Semialdhyde_dh"/>
    <property type="match status" value="1"/>
</dbReference>
<dbReference type="Pfam" id="PF22698">
    <property type="entry name" value="Semialdhyde_dhC_1"/>
    <property type="match status" value="1"/>
</dbReference>
<dbReference type="SMART" id="SM00859">
    <property type="entry name" value="Semialdhyde_dh"/>
    <property type="match status" value="1"/>
</dbReference>
<dbReference type="SUPFAM" id="SSF55347">
    <property type="entry name" value="Glyceraldehyde-3-phosphate dehydrogenase-like, C-terminal domain"/>
    <property type="match status" value="1"/>
</dbReference>
<dbReference type="SUPFAM" id="SSF51735">
    <property type="entry name" value="NAD(P)-binding Rossmann-fold domains"/>
    <property type="match status" value="1"/>
</dbReference>
<proteinExistence type="inferred from homology"/>